<proteinExistence type="evidence at protein level"/>
<sequence>MVDLSKDLQFFKVFLPEFGSHELVIPPAFIDMLEKPLPKEAFLVDEIGRLWCVETKTEDTEERFCVFFTKGWQSFANDQSLEFGDFLVFSYDGDSRFSVTIFANDGCKKDVGVVSTTDRSRVSLDEEEPDDIFTKPDRMRDCDCGQSINRKRKRDSVNEDPHVLVDDKPEYVSTYKTKPEHSEKTQRTVNRAGDTCDISWFPEKKHNGFEESVYKPKHPHFVRNITRGSLQKLELPLTFLRSNGIELEEDIELCDESGKKWPLKILNHDRGFKFSHESWLCFCKSHEMILTNKCLFEFIVPSNGRCSEILVRIVSGRLPTTMTKNNYQVIDMQP</sequence>
<gene>
    <name type="ordered locus">At5g66980</name>
    <name type="ORF">K8A10.5</name>
</gene>
<accession>Q9FGD2</accession>
<feature type="chain" id="PRO_0000375159" description="Putative B3 domain-containing protein At5g66980">
    <location>
        <begin position="1"/>
        <end position="334"/>
    </location>
</feature>
<feature type="DNA-binding region" description="TF-B3 1" evidence="1">
    <location>
        <begin position="8"/>
        <end position="105"/>
    </location>
</feature>
<feature type="DNA-binding region" description="TF-B3 2" evidence="1">
    <location>
        <begin position="218"/>
        <end position="317"/>
    </location>
</feature>
<protein>
    <recommendedName>
        <fullName>Putative B3 domain-containing protein At5g66980</fullName>
    </recommendedName>
</protein>
<keyword id="KW-0238">DNA-binding</keyword>
<keyword id="KW-0539">Nucleus</keyword>
<keyword id="KW-1185">Reference proteome</keyword>
<keyword id="KW-0677">Repeat</keyword>
<keyword id="KW-0804">Transcription</keyword>
<keyword id="KW-0805">Transcription regulation</keyword>
<comment type="interaction">
    <interactant intactId="EBI-15191923">
        <id>Q9FGD2</id>
    </interactant>
    <interactant intactId="EBI-15191921">
        <id>O22264</id>
        <label>MYB12</label>
    </interactant>
    <organismsDiffer>false</organismsDiffer>
    <experiments>4</experiments>
</comment>
<comment type="subcellular location">
    <subcellularLocation>
        <location evidence="1">Nucleus</location>
    </subcellularLocation>
</comment>
<organism>
    <name type="scientific">Arabidopsis thaliana</name>
    <name type="common">Mouse-ear cress</name>
    <dbReference type="NCBI Taxonomy" id="3702"/>
    <lineage>
        <taxon>Eukaryota</taxon>
        <taxon>Viridiplantae</taxon>
        <taxon>Streptophyta</taxon>
        <taxon>Embryophyta</taxon>
        <taxon>Tracheophyta</taxon>
        <taxon>Spermatophyta</taxon>
        <taxon>Magnoliopsida</taxon>
        <taxon>eudicotyledons</taxon>
        <taxon>Gunneridae</taxon>
        <taxon>Pentapetalae</taxon>
        <taxon>rosids</taxon>
        <taxon>malvids</taxon>
        <taxon>Brassicales</taxon>
        <taxon>Brassicaceae</taxon>
        <taxon>Camelineae</taxon>
        <taxon>Arabidopsis</taxon>
    </lineage>
</organism>
<evidence type="ECO:0000255" key="1">
    <source>
        <dbReference type="PROSITE-ProRule" id="PRU00326"/>
    </source>
</evidence>
<reference key="1">
    <citation type="submission" date="1999-04" db="EMBL/GenBank/DDBJ databases">
        <title>Structural analysis of Arabidopsis thaliana chromosome 5. XI.</title>
        <authorList>
            <person name="Kaneko T."/>
            <person name="Katoh T."/>
            <person name="Asamizu E."/>
            <person name="Sato S."/>
            <person name="Nakamura Y."/>
            <person name="Kotani H."/>
            <person name="Tabata S."/>
        </authorList>
    </citation>
    <scope>NUCLEOTIDE SEQUENCE [LARGE SCALE GENOMIC DNA]</scope>
    <source>
        <strain>cv. Columbia</strain>
    </source>
</reference>
<reference key="2">
    <citation type="journal article" date="2017" name="Plant J.">
        <title>Araport11: a complete reannotation of the Arabidopsis thaliana reference genome.</title>
        <authorList>
            <person name="Cheng C.Y."/>
            <person name="Krishnakumar V."/>
            <person name="Chan A.P."/>
            <person name="Thibaud-Nissen F."/>
            <person name="Schobel S."/>
            <person name="Town C.D."/>
        </authorList>
    </citation>
    <scope>GENOME REANNOTATION</scope>
    <source>
        <strain>cv. Columbia</strain>
    </source>
</reference>
<reference key="3">
    <citation type="journal article" date="2008" name="Trends Plant Sci.">
        <title>The plant B3 superfamily.</title>
        <authorList>
            <person name="Swaminathan K."/>
            <person name="Peterson K."/>
            <person name="Jack T."/>
        </authorList>
    </citation>
    <scope>GENE FAMILY</scope>
</reference>
<dbReference type="EMBL" id="AB026640">
    <property type="protein sequence ID" value="BAB08937.1"/>
    <property type="molecule type" value="Genomic_DNA"/>
</dbReference>
<dbReference type="EMBL" id="CP002688">
    <property type="protein sequence ID" value="AED98286.1"/>
    <property type="molecule type" value="Genomic_DNA"/>
</dbReference>
<dbReference type="RefSeq" id="NP_201499.1">
    <property type="nucleotide sequence ID" value="NM_126097.2"/>
</dbReference>
<dbReference type="SMR" id="Q9FGD2"/>
<dbReference type="BioGRID" id="22074">
    <property type="interactions" value="3"/>
</dbReference>
<dbReference type="FunCoup" id="Q9FGD2">
    <property type="interactions" value="99"/>
</dbReference>
<dbReference type="IntAct" id="Q9FGD2">
    <property type="interactions" value="3"/>
</dbReference>
<dbReference type="STRING" id="3702.Q9FGD2"/>
<dbReference type="PaxDb" id="3702-AT5G66980.1"/>
<dbReference type="EnsemblPlants" id="AT5G66980.1">
    <property type="protein sequence ID" value="AT5G66980.1"/>
    <property type="gene ID" value="AT5G66980"/>
</dbReference>
<dbReference type="GeneID" id="836832"/>
<dbReference type="Gramene" id="AT5G66980.1">
    <property type="protein sequence ID" value="AT5G66980.1"/>
    <property type="gene ID" value="AT5G66980"/>
</dbReference>
<dbReference type="KEGG" id="ath:AT5G66980"/>
<dbReference type="Araport" id="AT5G66980"/>
<dbReference type="TAIR" id="AT5G66980"/>
<dbReference type="eggNOG" id="ENOG502S1NW">
    <property type="taxonomic scope" value="Eukaryota"/>
</dbReference>
<dbReference type="HOGENOM" id="CLU_048511_1_1_1"/>
<dbReference type="InParanoid" id="Q9FGD2"/>
<dbReference type="OMA" id="FTKFFNG"/>
<dbReference type="OrthoDB" id="1666376at2759"/>
<dbReference type="PhylomeDB" id="Q9FGD2"/>
<dbReference type="PRO" id="PR:Q9FGD2"/>
<dbReference type="Proteomes" id="UP000006548">
    <property type="component" value="Chromosome 5"/>
</dbReference>
<dbReference type="ExpressionAtlas" id="Q9FGD2">
    <property type="expression patterns" value="baseline and differential"/>
</dbReference>
<dbReference type="GO" id="GO:0005634">
    <property type="term" value="C:nucleus"/>
    <property type="evidence" value="ECO:0007669"/>
    <property type="project" value="UniProtKB-SubCell"/>
</dbReference>
<dbReference type="GO" id="GO:0003677">
    <property type="term" value="F:DNA binding"/>
    <property type="evidence" value="ECO:0007669"/>
    <property type="project" value="UniProtKB-KW"/>
</dbReference>
<dbReference type="GO" id="GO:0006355">
    <property type="term" value="P:regulation of DNA-templated transcription"/>
    <property type="evidence" value="ECO:0000314"/>
    <property type="project" value="TAIR"/>
</dbReference>
<dbReference type="CDD" id="cd10017">
    <property type="entry name" value="B3_DNA"/>
    <property type="match status" value="2"/>
</dbReference>
<dbReference type="Gene3D" id="2.40.330.10">
    <property type="entry name" value="DNA-binding pseudobarrel domain"/>
    <property type="match status" value="2"/>
</dbReference>
<dbReference type="InterPro" id="IPR003340">
    <property type="entry name" value="B3_DNA-bd"/>
</dbReference>
<dbReference type="InterPro" id="IPR015300">
    <property type="entry name" value="DNA-bd_pseudobarrel_sf"/>
</dbReference>
<dbReference type="InterPro" id="IPR050655">
    <property type="entry name" value="Plant_B3_domain"/>
</dbReference>
<dbReference type="PANTHER" id="PTHR31920">
    <property type="entry name" value="B3 DOMAIN-CONTAINING"/>
    <property type="match status" value="1"/>
</dbReference>
<dbReference type="PANTHER" id="PTHR31920:SF135">
    <property type="entry name" value="B3 DOMAIN-CONTAINING PROTEIN OS03G0621600-RELATED"/>
    <property type="match status" value="1"/>
</dbReference>
<dbReference type="Pfam" id="PF02362">
    <property type="entry name" value="B3"/>
    <property type="match status" value="2"/>
</dbReference>
<dbReference type="SMART" id="SM01019">
    <property type="entry name" value="B3"/>
    <property type="match status" value="2"/>
</dbReference>
<dbReference type="SUPFAM" id="SSF101936">
    <property type="entry name" value="DNA-binding pseudobarrel domain"/>
    <property type="match status" value="2"/>
</dbReference>
<dbReference type="PROSITE" id="PS50863">
    <property type="entry name" value="B3"/>
    <property type="match status" value="2"/>
</dbReference>
<name>Y5698_ARATH</name>